<dbReference type="EMBL" id="CP000721">
    <property type="protein sequence ID" value="ABR32353.1"/>
    <property type="molecule type" value="Genomic_DNA"/>
</dbReference>
<dbReference type="RefSeq" id="WP_011967520.1">
    <property type="nucleotide sequence ID" value="NC_009617.1"/>
</dbReference>
<dbReference type="SMR" id="A6LPS3"/>
<dbReference type="KEGG" id="cbe:Cbei_0163"/>
<dbReference type="eggNOG" id="COG0094">
    <property type="taxonomic scope" value="Bacteria"/>
</dbReference>
<dbReference type="HOGENOM" id="CLU_061015_2_1_9"/>
<dbReference type="Proteomes" id="UP000000565">
    <property type="component" value="Chromosome"/>
</dbReference>
<dbReference type="GO" id="GO:1990904">
    <property type="term" value="C:ribonucleoprotein complex"/>
    <property type="evidence" value="ECO:0007669"/>
    <property type="project" value="UniProtKB-KW"/>
</dbReference>
<dbReference type="GO" id="GO:0005840">
    <property type="term" value="C:ribosome"/>
    <property type="evidence" value="ECO:0007669"/>
    <property type="project" value="UniProtKB-KW"/>
</dbReference>
<dbReference type="GO" id="GO:0019843">
    <property type="term" value="F:rRNA binding"/>
    <property type="evidence" value="ECO:0007669"/>
    <property type="project" value="UniProtKB-UniRule"/>
</dbReference>
<dbReference type="GO" id="GO:0003735">
    <property type="term" value="F:structural constituent of ribosome"/>
    <property type="evidence" value="ECO:0007669"/>
    <property type="project" value="InterPro"/>
</dbReference>
<dbReference type="GO" id="GO:0000049">
    <property type="term" value="F:tRNA binding"/>
    <property type="evidence" value="ECO:0007669"/>
    <property type="project" value="UniProtKB-UniRule"/>
</dbReference>
<dbReference type="GO" id="GO:0006412">
    <property type="term" value="P:translation"/>
    <property type="evidence" value="ECO:0007669"/>
    <property type="project" value="UniProtKB-UniRule"/>
</dbReference>
<dbReference type="FunFam" id="3.30.1440.10:FF:000001">
    <property type="entry name" value="50S ribosomal protein L5"/>
    <property type="match status" value="1"/>
</dbReference>
<dbReference type="Gene3D" id="3.30.1440.10">
    <property type="match status" value="1"/>
</dbReference>
<dbReference type="HAMAP" id="MF_01333_B">
    <property type="entry name" value="Ribosomal_uL5_B"/>
    <property type="match status" value="1"/>
</dbReference>
<dbReference type="InterPro" id="IPR002132">
    <property type="entry name" value="Ribosomal_uL5"/>
</dbReference>
<dbReference type="InterPro" id="IPR020930">
    <property type="entry name" value="Ribosomal_uL5_bac-type"/>
</dbReference>
<dbReference type="InterPro" id="IPR031309">
    <property type="entry name" value="Ribosomal_uL5_C"/>
</dbReference>
<dbReference type="InterPro" id="IPR020929">
    <property type="entry name" value="Ribosomal_uL5_CS"/>
</dbReference>
<dbReference type="InterPro" id="IPR022803">
    <property type="entry name" value="Ribosomal_uL5_dom_sf"/>
</dbReference>
<dbReference type="InterPro" id="IPR031310">
    <property type="entry name" value="Ribosomal_uL5_N"/>
</dbReference>
<dbReference type="NCBIfam" id="NF000585">
    <property type="entry name" value="PRK00010.1"/>
    <property type="match status" value="1"/>
</dbReference>
<dbReference type="PANTHER" id="PTHR11994">
    <property type="entry name" value="60S RIBOSOMAL PROTEIN L11-RELATED"/>
    <property type="match status" value="1"/>
</dbReference>
<dbReference type="Pfam" id="PF00281">
    <property type="entry name" value="Ribosomal_L5"/>
    <property type="match status" value="1"/>
</dbReference>
<dbReference type="Pfam" id="PF00673">
    <property type="entry name" value="Ribosomal_L5_C"/>
    <property type="match status" value="1"/>
</dbReference>
<dbReference type="PIRSF" id="PIRSF002161">
    <property type="entry name" value="Ribosomal_L5"/>
    <property type="match status" value="1"/>
</dbReference>
<dbReference type="SUPFAM" id="SSF55282">
    <property type="entry name" value="RL5-like"/>
    <property type="match status" value="1"/>
</dbReference>
<dbReference type="PROSITE" id="PS00358">
    <property type="entry name" value="RIBOSOMAL_L5"/>
    <property type="match status" value="1"/>
</dbReference>
<name>RL5_CLOB8</name>
<sequence>MTRLQEKYQKEVVPAMIEKFGYKNIMEVPKLEKIVINMGVGEAKENQKVLESAVNDLTLIAGQKPVLTRAKKSVANFKIRENMPLGCKVTLRKANMFEFADKLMSIALPRVRDFRGVSSKAFDGRGNYSLGIKEQLIFPEIEYDKIDKVRGMDIIFVTTANTDEEARELLRFLGMPFAQ</sequence>
<accession>A6LPS3</accession>
<gene>
    <name evidence="1" type="primary">rplE</name>
    <name type="ordered locus">Cbei_0163</name>
</gene>
<keyword id="KW-0687">Ribonucleoprotein</keyword>
<keyword id="KW-0689">Ribosomal protein</keyword>
<keyword id="KW-0694">RNA-binding</keyword>
<keyword id="KW-0699">rRNA-binding</keyword>
<keyword id="KW-0820">tRNA-binding</keyword>
<protein>
    <recommendedName>
        <fullName evidence="1">Large ribosomal subunit protein uL5</fullName>
    </recommendedName>
    <alternativeName>
        <fullName evidence="2">50S ribosomal protein L5</fullName>
    </alternativeName>
</protein>
<evidence type="ECO:0000255" key="1">
    <source>
        <dbReference type="HAMAP-Rule" id="MF_01333"/>
    </source>
</evidence>
<evidence type="ECO:0000305" key="2"/>
<reference key="1">
    <citation type="submission" date="2007-06" db="EMBL/GenBank/DDBJ databases">
        <title>Complete sequence of Clostridium beijerinckii NCIMB 8052.</title>
        <authorList>
            <consortium name="US DOE Joint Genome Institute"/>
            <person name="Copeland A."/>
            <person name="Lucas S."/>
            <person name="Lapidus A."/>
            <person name="Barry K."/>
            <person name="Detter J.C."/>
            <person name="Glavina del Rio T."/>
            <person name="Hammon N."/>
            <person name="Israni S."/>
            <person name="Dalin E."/>
            <person name="Tice H."/>
            <person name="Pitluck S."/>
            <person name="Sims D."/>
            <person name="Brettin T."/>
            <person name="Bruce D."/>
            <person name="Tapia R."/>
            <person name="Brainard J."/>
            <person name="Schmutz J."/>
            <person name="Larimer F."/>
            <person name="Land M."/>
            <person name="Hauser L."/>
            <person name="Kyrpides N."/>
            <person name="Mikhailova N."/>
            <person name="Bennet G."/>
            <person name="Cann I."/>
            <person name="Chen J.-S."/>
            <person name="Contreras A.L."/>
            <person name="Jones D."/>
            <person name="Kashket E."/>
            <person name="Mitchell W."/>
            <person name="Stoddard S."/>
            <person name="Schwarz W."/>
            <person name="Qureshi N."/>
            <person name="Young M."/>
            <person name="Shi Z."/>
            <person name="Ezeji T."/>
            <person name="White B."/>
            <person name="Blaschek H."/>
            <person name="Richardson P."/>
        </authorList>
    </citation>
    <scope>NUCLEOTIDE SEQUENCE [LARGE SCALE GENOMIC DNA]</scope>
    <source>
        <strain>ATCC 51743 / NCIMB 8052</strain>
    </source>
</reference>
<comment type="function">
    <text evidence="1">This is one of the proteins that bind and probably mediate the attachment of the 5S RNA into the large ribosomal subunit, where it forms part of the central protuberance. In the 70S ribosome it contacts protein S13 of the 30S subunit (bridge B1b), connecting the 2 subunits; this bridge is implicated in subunit movement. Contacts the P site tRNA; the 5S rRNA and some of its associated proteins might help stabilize positioning of ribosome-bound tRNAs.</text>
</comment>
<comment type="subunit">
    <text evidence="1">Part of the 50S ribosomal subunit; part of the 5S rRNA/L5/L18/L25 subcomplex. Contacts the 5S rRNA and the P site tRNA. Forms a bridge to the 30S subunit in the 70S ribosome.</text>
</comment>
<comment type="similarity">
    <text evidence="1">Belongs to the universal ribosomal protein uL5 family.</text>
</comment>
<feature type="chain" id="PRO_1000086584" description="Large ribosomal subunit protein uL5">
    <location>
        <begin position="1"/>
        <end position="179"/>
    </location>
</feature>
<organism>
    <name type="scientific">Clostridium beijerinckii (strain ATCC 51743 / NCIMB 8052)</name>
    <name type="common">Clostridium acetobutylicum</name>
    <dbReference type="NCBI Taxonomy" id="290402"/>
    <lineage>
        <taxon>Bacteria</taxon>
        <taxon>Bacillati</taxon>
        <taxon>Bacillota</taxon>
        <taxon>Clostridia</taxon>
        <taxon>Eubacteriales</taxon>
        <taxon>Clostridiaceae</taxon>
        <taxon>Clostridium</taxon>
    </lineage>
</organism>
<proteinExistence type="inferred from homology"/>